<organism>
    <name type="scientific">Mycoplasmoides gallisepticum (strain R(low / passage 15 / clone 2))</name>
    <name type="common">Mycoplasma gallisepticum</name>
    <dbReference type="NCBI Taxonomy" id="710127"/>
    <lineage>
        <taxon>Bacteria</taxon>
        <taxon>Bacillati</taxon>
        <taxon>Mycoplasmatota</taxon>
        <taxon>Mycoplasmoidales</taxon>
        <taxon>Mycoplasmoidaceae</taxon>
        <taxon>Mycoplasmoides</taxon>
    </lineage>
</organism>
<gene>
    <name evidence="1" type="primary">tig</name>
    <name type="ordered locus">MYCGA3730</name>
    <name type="ORF">MGA_1297</name>
</gene>
<reference key="1">
    <citation type="journal article" date="2003" name="Microbiology">
        <title>The complete genome sequence of the avian pathogen Mycoplasma gallisepticum strain R(low).</title>
        <authorList>
            <person name="Papazisi L."/>
            <person name="Gorton T.S."/>
            <person name="Kutish G."/>
            <person name="Markham P.F."/>
            <person name="Browning G.F."/>
            <person name="Nguyen D.K."/>
            <person name="Swartzell S."/>
            <person name="Madan A."/>
            <person name="Mahairas G."/>
            <person name="Geary S.J."/>
        </authorList>
    </citation>
    <scope>NUCLEOTIDE SEQUENCE [LARGE SCALE GENOMIC DNA]</scope>
    <source>
        <strain>R(low / passage 15 / clone 2)</strain>
    </source>
</reference>
<sequence length="443" mass="51289">MFKIREKTNADHKVKYIVDVNEKNWNEAYQKKLNAAVKNVKIQGFRKGHVPYQEAIKHIDQIGLFDRAVNQLVQPIYLELVKQEKIKDSETVLEENPEVSVVEIDDKKLALSYSFETIPEVKVGDYLKINGFLSETPVKDEDVQTELVRIFKSAGKLVDKKEGATLEKGDIAFLDFSGEIDNKAFEGGKAKNYELEIGSNSFIPGFEDQMVGMKVGEKRDLNLTFPKDYHEKTYAGKPVLFKVKLNSIKEVQLPEMTVEKLNELMKTQYKNLDEAKEDIKKRMDRNQQEHANQMNTMLLTQFANEDCQFSHIPKSLLDREVNLLYQQFANQMQQIKMSVEDALKIQNQTKEQLYQRLTEQATRAIKLVLVLEEIGDLEKISVSEAEINQEIEERIKEISNNQELPKEQYDAIKNYFVTQKELIESMLTNKKVVDLIIKKNLAR</sequence>
<keyword id="KW-0131">Cell cycle</keyword>
<keyword id="KW-0132">Cell division</keyword>
<keyword id="KW-0143">Chaperone</keyword>
<keyword id="KW-0963">Cytoplasm</keyword>
<keyword id="KW-0413">Isomerase</keyword>
<keyword id="KW-1185">Reference proteome</keyword>
<keyword id="KW-0697">Rotamase</keyword>
<dbReference type="EC" id="5.2.1.8" evidence="1"/>
<dbReference type="EMBL" id="AE015450">
    <property type="protein sequence ID" value="AAP56723.2"/>
    <property type="molecule type" value="Genomic_DNA"/>
</dbReference>
<dbReference type="RefSeq" id="WP_011113619.1">
    <property type="nucleotide sequence ID" value="NC_004829.2"/>
</dbReference>
<dbReference type="SMR" id="Q7NBA6"/>
<dbReference type="GeneID" id="93510203"/>
<dbReference type="KEGG" id="mga:MGA_1297"/>
<dbReference type="PATRIC" id="fig|233150.7.peg.418"/>
<dbReference type="HOGENOM" id="CLU_033058_3_2_14"/>
<dbReference type="OrthoDB" id="9767721at2"/>
<dbReference type="Proteomes" id="UP000001418">
    <property type="component" value="Chromosome"/>
</dbReference>
<dbReference type="GO" id="GO:0005737">
    <property type="term" value="C:cytoplasm"/>
    <property type="evidence" value="ECO:0007669"/>
    <property type="project" value="UniProtKB-SubCell"/>
</dbReference>
<dbReference type="GO" id="GO:0003755">
    <property type="term" value="F:peptidyl-prolyl cis-trans isomerase activity"/>
    <property type="evidence" value="ECO:0007669"/>
    <property type="project" value="UniProtKB-UniRule"/>
</dbReference>
<dbReference type="GO" id="GO:0044183">
    <property type="term" value="F:protein folding chaperone"/>
    <property type="evidence" value="ECO:0007669"/>
    <property type="project" value="TreeGrafter"/>
</dbReference>
<dbReference type="GO" id="GO:0043022">
    <property type="term" value="F:ribosome binding"/>
    <property type="evidence" value="ECO:0007669"/>
    <property type="project" value="TreeGrafter"/>
</dbReference>
<dbReference type="GO" id="GO:0051083">
    <property type="term" value="P:'de novo' cotranslational protein folding"/>
    <property type="evidence" value="ECO:0007669"/>
    <property type="project" value="TreeGrafter"/>
</dbReference>
<dbReference type="GO" id="GO:0051301">
    <property type="term" value="P:cell division"/>
    <property type="evidence" value="ECO:0007669"/>
    <property type="project" value="UniProtKB-KW"/>
</dbReference>
<dbReference type="GO" id="GO:0061077">
    <property type="term" value="P:chaperone-mediated protein folding"/>
    <property type="evidence" value="ECO:0007669"/>
    <property type="project" value="TreeGrafter"/>
</dbReference>
<dbReference type="GO" id="GO:0015031">
    <property type="term" value="P:protein transport"/>
    <property type="evidence" value="ECO:0007669"/>
    <property type="project" value="UniProtKB-UniRule"/>
</dbReference>
<dbReference type="GO" id="GO:0043335">
    <property type="term" value="P:protein unfolding"/>
    <property type="evidence" value="ECO:0007669"/>
    <property type="project" value="TreeGrafter"/>
</dbReference>
<dbReference type="FunFam" id="3.10.50.40:FF:000001">
    <property type="entry name" value="Trigger factor"/>
    <property type="match status" value="1"/>
</dbReference>
<dbReference type="Gene3D" id="3.10.50.40">
    <property type="match status" value="1"/>
</dbReference>
<dbReference type="Gene3D" id="3.30.70.1050">
    <property type="entry name" value="Trigger factor ribosome-binding domain"/>
    <property type="match status" value="1"/>
</dbReference>
<dbReference type="Gene3D" id="1.10.3120.10">
    <property type="entry name" value="Trigger factor, C-terminal domain"/>
    <property type="match status" value="1"/>
</dbReference>
<dbReference type="HAMAP" id="MF_00303">
    <property type="entry name" value="Trigger_factor_Tig"/>
    <property type="match status" value="1"/>
</dbReference>
<dbReference type="InterPro" id="IPR046357">
    <property type="entry name" value="PPIase_dom_sf"/>
</dbReference>
<dbReference type="InterPro" id="IPR001179">
    <property type="entry name" value="PPIase_FKBP_dom"/>
</dbReference>
<dbReference type="InterPro" id="IPR005215">
    <property type="entry name" value="Trig_fac"/>
</dbReference>
<dbReference type="InterPro" id="IPR008880">
    <property type="entry name" value="Trigger_fac_C"/>
</dbReference>
<dbReference type="InterPro" id="IPR037041">
    <property type="entry name" value="Trigger_fac_C_sf"/>
</dbReference>
<dbReference type="InterPro" id="IPR008881">
    <property type="entry name" value="Trigger_fac_ribosome-bd_bac"/>
</dbReference>
<dbReference type="InterPro" id="IPR036611">
    <property type="entry name" value="Trigger_fac_ribosome-bd_sf"/>
</dbReference>
<dbReference type="InterPro" id="IPR027304">
    <property type="entry name" value="Trigger_fact/SurA_dom_sf"/>
</dbReference>
<dbReference type="NCBIfam" id="TIGR00115">
    <property type="entry name" value="tig"/>
    <property type="match status" value="1"/>
</dbReference>
<dbReference type="PANTHER" id="PTHR30560">
    <property type="entry name" value="TRIGGER FACTOR CHAPERONE AND PEPTIDYL-PROLYL CIS/TRANS ISOMERASE"/>
    <property type="match status" value="1"/>
</dbReference>
<dbReference type="PANTHER" id="PTHR30560:SF3">
    <property type="entry name" value="TRIGGER FACTOR-LIKE PROTEIN TIG, CHLOROPLASTIC"/>
    <property type="match status" value="1"/>
</dbReference>
<dbReference type="Pfam" id="PF00254">
    <property type="entry name" value="FKBP_C"/>
    <property type="match status" value="1"/>
</dbReference>
<dbReference type="Pfam" id="PF05698">
    <property type="entry name" value="Trigger_C"/>
    <property type="match status" value="1"/>
</dbReference>
<dbReference type="Pfam" id="PF05697">
    <property type="entry name" value="Trigger_N"/>
    <property type="match status" value="1"/>
</dbReference>
<dbReference type="PIRSF" id="PIRSF003095">
    <property type="entry name" value="Trigger_factor"/>
    <property type="match status" value="1"/>
</dbReference>
<dbReference type="SUPFAM" id="SSF54534">
    <property type="entry name" value="FKBP-like"/>
    <property type="match status" value="1"/>
</dbReference>
<dbReference type="SUPFAM" id="SSF109998">
    <property type="entry name" value="Triger factor/SurA peptide-binding domain-like"/>
    <property type="match status" value="1"/>
</dbReference>
<dbReference type="SUPFAM" id="SSF102735">
    <property type="entry name" value="Trigger factor ribosome-binding domain"/>
    <property type="match status" value="1"/>
</dbReference>
<dbReference type="PROSITE" id="PS50059">
    <property type="entry name" value="FKBP_PPIASE"/>
    <property type="match status" value="1"/>
</dbReference>
<evidence type="ECO:0000255" key="1">
    <source>
        <dbReference type="HAMAP-Rule" id="MF_00303"/>
    </source>
</evidence>
<feature type="chain" id="PRO_0000179381" description="Trigger factor">
    <location>
        <begin position="1"/>
        <end position="443"/>
    </location>
</feature>
<feature type="domain" description="PPIase FKBP-type" evidence="1">
    <location>
        <begin position="169"/>
        <end position="254"/>
    </location>
</feature>
<protein>
    <recommendedName>
        <fullName evidence="1">Trigger factor</fullName>
        <shortName evidence="1">TF</shortName>
        <ecNumber evidence="1">5.2.1.8</ecNumber>
    </recommendedName>
    <alternativeName>
        <fullName evidence="1">PPIase</fullName>
    </alternativeName>
</protein>
<name>TIG_MYCGA</name>
<proteinExistence type="inferred from homology"/>
<accession>Q7NBA6</accession>
<comment type="function">
    <text evidence="1">Involved in protein export. Acts as a chaperone by maintaining the newly synthesized protein in an open conformation. Functions as a peptidyl-prolyl cis-trans isomerase.</text>
</comment>
<comment type="catalytic activity">
    <reaction evidence="1">
        <text>[protein]-peptidylproline (omega=180) = [protein]-peptidylproline (omega=0)</text>
        <dbReference type="Rhea" id="RHEA:16237"/>
        <dbReference type="Rhea" id="RHEA-COMP:10747"/>
        <dbReference type="Rhea" id="RHEA-COMP:10748"/>
        <dbReference type="ChEBI" id="CHEBI:83833"/>
        <dbReference type="ChEBI" id="CHEBI:83834"/>
        <dbReference type="EC" id="5.2.1.8"/>
    </reaction>
</comment>
<comment type="subcellular location">
    <subcellularLocation>
        <location>Cytoplasm</location>
    </subcellularLocation>
    <text evidence="1">About half TF is bound to the ribosome near the polypeptide exit tunnel while the other half is free in the cytoplasm.</text>
</comment>
<comment type="domain">
    <text evidence="1">Consists of 3 domains; the N-terminus binds the ribosome, the middle domain has PPIase activity, while the C-terminus has intrinsic chaperone activity on its own.</text>
</comment>
<comment type="similarity">
    <text evidence="1">Belongs to the FKBP-type PPIase family. Tig subfamily.</text>
</comment>